<comment type="function">
    <text evidence="1">Cell wall formation.</text>
</comment>
<comment type="catalytic activity">
    <reaction evidence="1">
        <text>UDP-N-acetyl-alpha-D-muramate + L-alanine + ATP = UDP-N-acetyl-alpha-D-muramoyl-L-alanine + ADP + phosphate + H(+)</text>
        <dbReference type="Rhea" id="RHEA:23372"/>
        <dbReference type="ChEBI" id="CHEBI:15378"/>
        <dbReference type="ChEBI" id="CHEBI:30616"/>
        <dbReference type="ChEBI" id="CHEBI:43474"/>
        <dbReference type="ChEBI" id="CHEBI:57972"/>
        <dbReference type="ChEBI" id="CHEBI:70757"/>
        <dbReference type="ChEBI" id="CHEBI:83898"/>
        <dbReference type="ChEBI" id="CHEBI:456216"/>
        <dbReference type="EC" id="6.3.2.8"/>
    </reaction>
</comment>
<comment type="pathway">
    <text evidence="1">Cell wall biogenesis; peptidoglycan biosynthesis.</text>
</comment>
<comment type="subcellular location">
    <subcellularLocation>
        <location evidence="1">Cytoplasm</location>
    </subcellularLocation>
</comment>
<comment type="similarity">
    <text evidence="1">Belongs to the MurCDEF family.</text>
</comment>
<accession>B6ELH4</accession>
<dbReference type="EC" id="6.3.2.8" evidence="1"/>
<dbReference type="EMBL" id="FM178379">
    <property type="protein sequence ID" value="CAQ80327.1"/>
    <property type="molecule type" value="Genomic_DNA"/>
</dbReference>
<dbReference type="RefSeq" id="WP_012551098.1">
    <property type="nucleotide sequence ID" value="NC_011312.1"/>
</dbReference>
<dbReference type="SMR" id="B6ELH4"/>
<dbReference type="KEGG" id="vsa:VSAL_I2643"/>
<dbReference type="eggNOG" id="COG0773">
    <property type="taxonomic scope" value="Bacteria"/>
</dbReference>
<dbReference type="HOGENOM" id="CLU_028104_2_2_6"/>
<dbReference type="UniPathway" id="UPA00219"/>
<dbReference type="Proteomes" id="UP000001730">
    <property type="component" value="Chromosome 1"/>
</dbReference>
<dbReference type="GO" id="GO:0005737">
    <property type="term" value="C:cytoplasm"/>
    <property type="evidence" value="ECO:0007669"/>
    <property type="project" value="UniProtKB-SubCell"/>
</dbReference>
<dbReference type="GO" id="GO:0005524">
    <property type="term" value="F:ATP binding"/>
    <property type="evidence" value="ECO:0007669"/>
    <property type="project" value="UniProtKB-UniRule"/>
</dbReference>
<dbReference type="GO" id="GO:0008763">
    <property type="term" value="F:UDP-N-acetylmuramate-L-alanine ligase activity"/>
    <property type="evidence" value="ECO:0007669"/>
    <property type="project" value="UniProtKB-UniRule"/>
</dbReference>
<dbReference type="GO" id="GO:0051301">
    <property type="term" value="P:cell division"/>
    <property type="evidence" value="ECO:0007669"/>
    <property type="project" value="UniProtKB-KW"/>
</dbReference>
<dbReference type="GO" id="GO:0071555">
    <property type="term" value="P:cell wall organization"/>
    <property type="evidence" value="ECO:0007669"/>
    <property type="project" value="UniProtKB-KW"/>
</dbReference>
<dbReference type="GO" id="GO:0009252">
    <property type="term" value="P:peptidoglycan biosynthetic process"/>
    <property type="evidence" value="ECO:0007669"/>
    <property type="project" value="UniProtKB-UniRule"/>
</dbReference>
<dbReference type="GO" id="GO:0008360">
    <property type="term" value="P:regulation of cell shape"/>
    <property type="evidence" value="ECO:0007669"/>
    <property type="project" value="UniProtKB-KW"/>
</dbReference>
<dbReference type="FunFam" id="3.40.1190.10:FF:000001">
    <property type="entry name" value="UDP-N-acetylmuramate--L-alanine ligase"/>
    <property type="match status" value="1"/>
</dbReference>
<dbReference type="FunFam" id="3.40.50.720:FF:000046">
    <property type="entry name" value="UDP-N-acetylmuramate--L-alanine ligase"/>
    <property type="match status" value="1"/>
</dbReference>
<dbReference type="Gene3D" id="3.90.190.20">
    <property type="entry name" value="Mur ligase, C-terminal domain"/>
    <property type="match status" value="1"/>
</dbReference>
<dbReference type="Gene3D" id="3.40.1190.10">
    <property type="entry name" value="Mur-like, catalytic domain"/>
    <property type="match status" value="1"/>
</dbReference>
<dbReference type="Gene3D" id="3.40.50.720">
    <property type="entry name" value="NAD(P)-binding Rossmann-like Domain"/>
    <property type="match status" value="1"/>
</dbReference>
<dbReference type="HAMAP" id="MF_00046">
    <property type="entry name" value="MurC"/>
    <property type="match status" value="1"/>
</dbReference>
<dbReference type="InterPro" id="IPR036565">
    <property type="entry name" value="Mur-like_cat_sf"/>
</dbReference>
<dbReference type="InterPro" id="IPR004101">
    <property type="entry name" value="Mur_ligase_C"/>
</dbReference>
<dbReference type="InterPro" id="IPR036615">
    <property type="entry name" value="Mur_ligase_C_dom_sf"/>
</dbReference>
<dbReference type="InterPro" id="IPR013221">
    <property type="entry name" value="Mur_ligase_cen"/>
</dbReference>
<dbReference type="InterPro" id="IPR000713">
    <property type="entry name" value="Mur_ligase_N"/>
</dbReference>
<dbReference type="InterPro" id="IPR050061">
    <property type="entry name" value="MurCDEF_pg_biosynth"/>
</dbReference>
<dbReference type="InterPro" id="IPR005758">
    <property type="entry name" value="UDP-N-AcMur_Ala_ligase_MurC"/>
</dbReference>
<dbReference type="NCBIfam" id="TIGR01082">
    <property type="entry name" value="murC"/>
    <property type="match status" value="1"/>
</dbReference>
<dbReference type="PANTHER" id="PTHR43445:SF3">
    <property type="entry name" value="UDP-N-ACETYLMURAMATE--L-ALANINE LIGASE"/>
    <property type="match status" value="1"/>
</dbReference>
<dbReference type="PANTHER" id="PTHR43445">
    <property type="entry name" value="UDP-N-ACETYLMURAMATE--L-ALANINE LIGASE-RELATED"/>
    <property type="match status" value="1"/>
</dbReference>
<dbReference type="Pfam" id="PF01225">
    <property type="entry name" value="Mur_ligase"/>
    <property type="match status" value="1"/>
</dbReference>
<dbReference type="Pfam" id="PF02875">
    <property type="entry name" value="Mur_ligase_C"/>
    <property type="match status" value="1"/>
</dbReference>
<dbReference type="Pfam" id="PF08245">
    <property type="entry name" value="Mur_ligase_M"/>
    <property type="match status" value="1"/>
</dbReference>
<dbReference type="SUPFAM" id="SSF51984">
    <property type="entry name" value="MurCD N-terminal domain"/>
    <property type="match status" value="1"/>
</dbReference>
<dbReference type="SUPFAM" id="SSF53623">
    <property type="entry name" value="MurD-like peptide ligases, catalytic domain"/>
    <property type="match status" value="1"/>
</dbReference>
<dbReference type="SUPFAM" id="SSF53244">
    <property type="entry name" value="MurD-like peptide ligases, peptide-binding domain"/>
    <property type="match status" value="1"/>
</dbReference>
<proteinExistence type="inferred from homology"/>
<organism>
    <name type="scientific">Aliivibrio salmonicida (strain LFI1238)</name>
    <name type="common">Vibrio salmonicida (strain LFI1238)</name>
    <dbReference type="NCBI Taxonomy" id="316275"/>
    <lineage>
        <taxon>Bacteria</taxon>
        <taxon>Pseudomonadati</taxon>
        <taxon>Pseudomonadota</taxon>
        <taxon>Gammaproteobacteria</taxon>
        <taxon>Vibrionales</taxon>
        <taxon>Vibrionaceae</taxon>
        <taxon>Aliivibrio</taxon>
    </lineage>
</organism>
<reference key="1">
    <citation type="journal article" date="2008" name="BMC Genomics">
        <title>The genome sequence of the fish pathogen Aliivibrio salmonicida strain LFI1238 shows extensive evidence of gene decay.</title>
        <authorList>
            <person name="Hjerde E."/>
            <person name="Lorentzen M.S."/>
            <person name="Holden M.T."/>
            <person name="Seeger K."/>
            <person name="Paulsen S."/>
            <person name="Bason N."/>
            <person name="Churcher C."/>
            <person name="Harris D."/>
            <person name="Norbertczak H."/>
            <person name="Quail M.A."/>
            <person name="Sanders S."/>
            <person name="Thurston S."/>
            <person name="Parkhill J."/>
            <person name="Willassen N.P."/>
            <person name="Thomson N.R."/>
        </authorList>
    </citation>
    <scope>NUCLEOTIDE SEQUENCE [LARGE SCALE GENOMIC DNA]</scope>
    <source>
        <strain>LFI1238</strain>
    </source>
</reference>
<name>MURC_ALISL</name>
<feature type="chain" id="PRO_1000091075" description="UDP-N-acetylmuramate--L-alanine ligase">
    <location>
        <begin position="1"/>
        <end position="487"/>
    </location>
</feature>
<feature type="binding site" evidence="1">
    <location>
        <begin position="129"/>
        <end position="135"/>
    </location>
    <ligand>
        <name>ATP</name>
        <dbReference type="ChEBI" id="CHEBI:30616"/>
    </ligand>
</feature>
<keyword id="KW-0067">ATP-binding</keyword>
<keyword id="KW-0131">Cell cycle</keyword>
<keyword id="KW-0132">Cell division</keyword>
<keyword id="KW-0133">Cell shape</keyword>
<keyword id="KW-0961">Cell wall biogenesis/degradation</keyword>
<keyword id="KW-0963">Cytoplasm</keyword>
<keyword id="KW-0436">Ligase</keyword>
<keyword id="KW-0547">Nucleotide-binding</keyword>
<keyword id="KW-0573">Peptidoglycan synthesis</keyword>
<sequence>MTTEQKLQLAEIRTMIPEMRRVECIHFVGIGGAGMSGIAEVLLNEGYHISGSDVAENSVTVRLAEKGADIFFGHHASNVEKASVVVVSTAIDQANPEIVAAKENRIPVIRRAEMLAELMRYRHGIAVAGTHGKTTTTALTTQIYSEAGLDPTFVNGGLVKNAGTNARLGSSRFLIAEADESDASFLHLQPMVSIVTNIEADHMDTYGGDFEVLKQTFIDFLHNLPFYGQAVMCIDDDVVRELLPRVSRQVITYGFSDDADVRLINYRQEGQKSFFTVQRKDRTDLDIVLNIPGKHNALNATAAIAVATEEDVEDSAILSALLNFEGAGRRFDQLGEFETGNGHAMLVDDYGHHPTEVDVTIKAARAGWEDKRLVMIFQPHRYSRTRDLYDDFANVLDNVDVLIMLDVYSAGEKPIAGADGRALCRTIRARGKLDPIFVPTIDALPSVLANIIQNNDLVLTQGAGDVGKLAKQLASLELNIQAMKELG</sequence>
<protein>
    <recommendedName>
        <fullName evidence="1">UDP-N-acetylmuramate--L-alanine ligase</fullName>
        <ecNumber evidence="1">6.3.2.8</ecNumber>
    </recommendedName>
    <alternativeName>
        <fullName evidence="1">UDP-N-acetylmuramoyl-L-alanine synthetase</fullName>
    </alternativeName>
</protein>
<evidence type="ECO:0000255" key="1">
    <source>
        <dbReference type="HAMAP-Rule" id="MF_00046"/>
    </source>
</evidence>
<gene>
    <name evidence="1" type="primary">murC</name>
    <name type="ordered locus">VSAL_I2643</name>
</gene>